<sequence>MSERHLPDDQSSTIDPYLITSVRQTLAEQSAALQNLSKQLDSGQYQRVLNLIMNCKGHVILSGMGKSGHVGRKMSATLASTGTPSFFIHPAEAFHGDLGMITPYDLLILISASGETDEILKLVPSLKNFGNRIIAITNNGNSTLAKNADAVLELHMANETCPNNLAPTTSTTLTMAIGDALAIAMIHQRKFMPNDFARYHPGGSLGRRLLTRVADVMQHDVPAVQLDASFKTVIQRITSGCQGMVMVEDAEGGLAGIITDGDLRRFMEKEDSLTSATAAQMMTREPLTLPEDTMIIEAEEKMQKHRVSTLLVTNKANKVTGLVRIFD</sequence>
<accession>Q47334</accession>
<name>KPSF5_ECOLX</name>
<protein>
    <recommendedName>
        <fullName>Arabinose 5-phosphate isomerase KpsF</fullName>
        <shortName>API</shortName>
        <ecNumber>5.3.1.13</ecNumber>
    </recommendedName>
    <alternativeName>
        <fullName>K-antigen-specific arabinose 5-phosphate isomerase</fullName>
        <shortName>K-API</shortName>
    </alternativeName>
    <alternativeName>
        <fullName>Polysialic acid capsule expression protein kpsF</fullName>
    </alternativeName>
</protein>
<keyword id="KW-0067">ATP-binding</keyword>
<keyword id="KW-0129">CBS domain</keyword>
<keyword id="KW-0413">Isomerase</keyword>
<keyword id="KW-0448">Lipopolysaccharide biosynthesis</keyword>
<keyword id="KW-0479">Metal-binding</keyword>
<keyword id="KW-0547">Nucleotide-binding</keyword>
<keyword id="KW-0677">Repeat</keyword>
<keyword id="KW-0862">Zinc</keyword>
<feature type="chain" id="PRO_0000136574" description="Arabinose 5-phosphate isomerase KpsF">
    <location>
        <begin position="1"/>
        <end position="327"/>
    </location>
</feature>
<feature type="domain" description="SIS" evidence="4">
    <location>
        <begin position="48"/>
        <end position="191"/>
    </location>
</feature>
<feature type="domain" description="CBS 1" evidence="3">
    <location>
        <begin position="217"/>
        <end position="273"/>
    </location>
</feature>
<feature type="domain" description="CBS 2" evidence="3">
    <location>
        <begin position="282"/>
        <end position="327"/>
    </location>
</feature>
<feature type="binding site" evidence="2">
    <location>
        <begin position="63"/>
        <end position="68"/>
    </location>
    <ligand>
        <name>ATP</name>
        <dbReference type="ChEBI" id="CHEBI:30616"/>
    </ligand>
</feature>
<feature type="binding site" evidence="1">
    <location>
        <begin position="82"/>
        <end position="83"/>
    </location>
    <ligand>
        <name>substrate</name>
    </ligand>
</feature>
<feature type="binding site" evidence="1">
    <location>
        <position position="89"/>
    </location>
    <ligand>
        <name>substrate</name>
    </ligand>
</feature>
<feature type="binding site" evidence="1">
    <location>
        <position position="89"/>
    </location>
    <ligand>
        <name>Zn(2+)</name>
        <dbReference type="ChEBI" id="CHEBI:29105"/>
    </ligand>
</feature>
<feature type="binding site" evidence="1">
    <location>
        <position position="95"/>
    </location>
    <ligand>
        <name>substrate</name>
    </ligand>
</feature>
<feature type="binding site" evidence="1">
    <location>
        <begin position="121"/>
        <end position="130"/>
    </location>
    <ligand>
        <name>substrate</name>
    </ligand>
</feature>
<feature type="binding site" evidence="1">
    <location>
        <begin position="155"/>
        <end position="157"/>
    </location>
    <ligand>
        <name>substrate</name>
    </ligand>
</feature>
<feature type="site" description="Catalytically relevant" evidence="1">
    <location>
        <position position="66"/>
    </location>
</feature>
<feature type="site" description="Catalytically relevant" evidence="1">
    <location>
        <position position="118"/>
    </location>
</feature>
<feature type="site" description="Catalytically relevant" evidence="1">
    <location>
        <position position="159"/>
    </location>
</feature>
<feature type="site" description="Catalytically relevant" evidence="1">
    <location>
        <position position="200"/>
    </location>
</feature>
<proteinExistence type="inferred from homology"/>
<organism>
    <name type="scientific">Escherichia coli</name>
    <dbReference type="NCBI Taxonomy" id="562"/>
    <lineage>
        <taxon>Bacteria</taxon>
        <taxon>Pseudomonadati</taxon>
        <taxon>Pseudomonadota</taxon>
        <taxon>Gammaproteobacteria</taxon>
        <taxon>Enterobacterales</taxon>
        <taxon>Enterobacteriaceae</taxon>
        <taxon>Escherichia</taxon>
    </lineage>
</organism>
<gene>
    <name type="primary">kpsF</name>
</gene>
<dbReference type="EC" id="5.3.1.13"/>
<dbReference type="EMBL" id="X95264">
    <property type="protein sequence ID" value="CAA64561.1"/>
    <property type="molecule type" value="Genomic_DNA"/>
</dbReference>
<dbReference type="RefSeq" id="WP_001296394.1">
    <property type="nucleotide sequence ID" value="NZ_WVTZ01000026.1"/>
</dbReference>
<dbReference type="SMR" id="Q47334"/>
<dbReference type="OMA" id="EREVCPN"/>
<dbReference type="GO" id="GO:0019146">
    <property type="term" value="F:arabinose-5-phosphate isomerase activity"/>
    <property type="evidence" value="ECO:0007669"/>
    <property type="project" value="UniProtKB-EC"/>
</dbReference>
<dbReference type="GO" id="GO:0005524">
    <property type="term" value="F:ATP binding"/>
    <property type="evidence" value="ECO:0007669"/>
    <property type="project" value="UniProtKB-KW"/>
</dbReference>
<dbReference type="GO" id="GO:0046872">
    <property type="term" value="F:metal ion binding"/>
    <property type="evidence" value="ECO:0007669"/>
    <property type="project" value="UniProtKB-KW"/>
</dbReference>
<dbReference type="GO" id="GO:0009103">
    <property type="term" value="P:lipopolysaccharide biosynthetic process"/>
    <property type="evidence" value="ECO:0007669"/>
    <property type="project" value="UniProtKB-KW"/>
</dbReference>
<dbReference type="CDD" id="cd04604">
    <property type="entry name" value="CBS_pair_SIS_assoc"/>
    <property type="match status" value="1"/>
</dbReference>
<dbReference type="CDD" id="cd05014">
    <property type="entry name" value="SIS_Kpsf"/>
    <property type="match status" value="1"/>
</dbReference>
<dbReference type="FunFam" id="3.40.50.10490:FF:000011">
    <property type="entry name" value="Arabinose 5-phosphate isomerase"/>
    <property type="match status" value="1"/>
</dbReference>
<dbReference type="Gene3D" id="3.10.580.10">
    <property type="entry name" value="CBS-domain"/>
    <property type="match status" value="1"/>
</dbReference>
<dbReference type="Gene3D" id="3.40.50.10490">
    <property type="entry name" value="Glucose-6-phosphate isomerase like protein, domain 1"/>
    <property type="match status" value="1"/>
</dbReference>
<dbReference type="InterPro" id="IPR000644">
    <property type="entry name" value="CBS_dom"/>
</dbReference>
<dbReference type="InterPro" id="IPR046342">
    <property type="entry name" value="CBS_dom_sf"/>
</dbReference>
<dbReference type="InterPro" id="IPR050986">
    <property type="entry name" value="GutQ/KpsF_isomerases"/>
</dbReference>
<dbReference type="InterPro" id="IPR004800">
    <property type="entry name" value="KdsD/KpsF-type"/>
</dbReference>
<dbReference type="InterPro" id="IPR001347">
    <property type="entry name" value="SIS_dom"/>
</dbReference>
<dbReference type="InterPro" id="IPR046348">
    <property type="entry name" value="SIS_dom_sf"/>
</dbReference>
<dbReference type="InterPro" id="IPR035474">
    <property type="entry name" value="SIS_Kpsf"/>
</dbReference>
<dbReference type="NCBIfam" id="TIGR00393">
    <property type="entry name" value="kpsF"/>
    <property type="match status" value="1"/>
</dbReference>
<dbReference type="PANTHER" id="PTHR42745">
    <property type="match status" value="1"/>
</dbReference>
<dbReference type="PANTHER" id="PTHR42745:SF1">
    <property type="entry name" value="ARABINOSE 5-PHOSPHATE ISOMERASE KDSD"/>
    <property type="match status" value="1"/>
</dbReference>
<dbReference type="Pfam" id="PF00571">
    <property type="entry name" value="CBS"/>
    <property type="match status" value="2"/>
</dbReference>
<dbReference type="Pfam" id="PF01380">
    <property type="entry name" value="SIS"/>
    <property type="match status" value="1"/>
</dbReference>
<dbReference type="PIRSF" id="PIRSF004692">
    <property type="entry name" value="KdsD_KpsF"/>
    <property type="match status" value="1"/>
</dbReference>
<dbReference type="SUPFAM" id="SSF53697">
    <property type="entry name" value="SIS domain"/>
    <property type="match status" value="1"/>
</dbReference>
<dbReference type="PROSITE" id="PS51371">
    <property type="entry name" value="CBS"/>
    <property type="match status" value="2"/>
</dbReference>
<dbReference type="PROSITE" id="PS51464">
    <property type="entry name" value="SIS"/>
    <property type="match status" value="1"/>
</dbReference>
<comment type="function">
    <text evidence="1">Involved in the biosynthesis of K-antigen capsules. Catalyzes the reversible aldol-ketol isomerization between D-ribulose 5-phosphate (Ru5P) and D-arabinose 5-phosphate (A5P) (By similarity).</text>
</comment>
<comment type="catalytic activity">
    <reaction>
        <text>D-arabinose 5-phosphate = D-ribulose 5-phosphate</text>
        <dbReference type="Rhea" id="RHEA:23104"/>
        <dbReference type="ChEBI" id="CHEBI:57693"/>
        <dbReference type="ChEBI" id="CHEBI:58121"/>
        <dbReference type="EC" id="5.3.1.13"/>
    </reaction>
</comment>
<comment type="subunit">
    <text evidence="1">Homotetramer.</text>
</comment>
<comment type="similarity">
    <text evidence="5">Belongs to the SIS family. GutQ/KpsF subfamily.</text>
</comment>
<reference key="1">
    <citation type="journal article" date="1996" name="J. Bacteriol.">
        <title>Transcriptional organization and regulation of expression of region 1 of the Escherichia coli K5 capsule gene cluster.</title>
        <authorList>
            <person name="Simpson D.A."/>
            <person name="Hammarton T.C."/>
            <person name="Roberts I.S."/>
        </authorList>
    </citation>
    <scope>NUCLEOTIDE SEQUENCE [GENOMIC DNA]</scope>
    <source>
        <strain>K5</strain>
    </source>
</reference>
<evidence type="ECO:0000250" key="1"/>
<evidence type="ECO:0000255" key="2"/>
<evidence type="ECO:0000255" key="3">
    <source>
        <dbReference type="PROSITE-ProRule" id="PRU00703"/>
    </source>
</evidence>
<evidence type="ECO:0000255" key="4">
    <source>
        <dbReference type="PROSITE-ProRule" id="PRU00797"/>
    </source>
</evidence>
<evidence type="ECO:0000305" key="5"/>